<accession>Q8TGT5</accession>
<feature type="chain" id="PRO_0000299925" description="Putative uncharacterized protein YHR032C-A">
    <location>
        <begin position="1"/>
        <end position="39"/>
    </location>
</feature>
<gene>
    <name type="ordered locus">YHR032C-A</name>
</gene>
<sequence length="39" mass="4392">MKGSKLFQMQKCMPVWCRTGTCIILPVACHMAKPLKLPT</sequence>
<comment type="miscellaneous">
    <text evidence="1">Partially overlaps YHR032W-A.</text>
</comment>
<comment type="caution">
    <text evidence="2">Product of a dubious gene prediction unlikely to encode a functional protein. Because of that it is not part of the S.cerevisiae S288c complete/reference proteome set.</text>
</comment>
<proteinExistence type="uncertain"/>
<name>YH032_YEAST</name>
<protein>
    <recommendedName>
        <fullName>Putative uncharacterized protein YHR032C-A</fullName>
    </recommendedName>
</protein>
<reference key="1">
    <citation type="journal article" date="1994" name="Science">
        <title>Complete nucleotide sequence of Saccharomyces cerevisiae chromosome VIII.</title>
        <authorList>
            <person name="Johnston M."/>
            <person name="Andrews S."/>
            <person name="Brinkman R."/>
            <person name="Cooper J."/>
            <person name="Ding H."/>
            <person name="Dover J."/>
            <person name="Du Z."/>
            <person name="Favello A."/>
            <person name="Fulton L."/>
            <person name="Gattung S."/>
            <person name="Geisel C."/>
            <person name="Kirsten J."/>
            <person name="Kucaba T."/>
            <person name="Hillier L.W."/>
            <person name="Jier M."/>
            <person name="Johnston L."/>
            <person name="Langston Y."/>
            <person name="Latreille P."/>
            <person name="Louis E.J."/>
            <person name="Macri C."/>
            <person name="Mardis E."/>
            <person name="Menezes S."/>
            <person name="Mouser L."/>
            <person name="Nhan M."/>
            <person name="Rifkin L."/>
            <person name="Riles L."/>
            <person name="St Peter H."/>
            <person name="Trevaskis E."/>
            <person name="Vaughan K."/>
            <person name="Vignati D."/>
            <person name="Wilcox L."/>
            <person name="Wohldman P."/>
            <person name="Waterston R."/>
            <person name="Wilson R."/>
            <person name="Vaudin M."/>
        </authorList>
    </citation>
    <scope>NUCLEOTIDE SEQUENCE [LARGE SCALE GENOMIC DNA]</scope>
    <source>
        <strain>ATCC 204508 / S288c</strain>
    </source>
</reference>
<reference key="2">
    <citation type="journal article" date="2014" name="G3 (Bethesda)">
        <title>The reference genome sequence of Saccharomyces cerevisiae: Then and now.</title>
        <authorList>
            <person name="Engel S.R."/>
            <person name="Dietrich F.S."/>
            <person name="Fisk D.G."/>
            <person name="Binkley G."/>
            <person name="Balakrishnan R."/>
            <person name="Costanzo M.C."/>
            <person name="Dwight S.S."/>
            <person name="Hitz B.C."/>
            <person name="Karra K."/>
            <person name="Nash R.S."/>
            <person name="Weng S."/>
            <person name="Wong E.D."/>
            <person name="Lloyd P."/>
            <person name="Skrzypek M.S."/>
            <person name="Miyasato S.R."/>
            <person name="Simison M."/>
            <person name="Cherry J.M."/>
        </authorList>
    </citation>
    <scope>GENOME REANNOTATION</scope>
    <source>
        <strain>ATCC 204508 / S288c</strain>
    </source>
</reference>
<reference key="3">
    <citation type="journal article" date="2002" name="Nat. Biotechnol.">
        <title>An integrated approach for finding overlooked genes in yeast.</title>
        <authorList>
            <person name="Kumar A."/>
            <person name="Harrison P.M."/>
            <person name="Cheung K.-H."/>
            <person name="Lan N."/>
            <person name="Echols N."/>
            <person name="Bertone P."/>
            <person name="Miller P."/>
            <person name="Gerstein M.B."/>
            <person name="Snyder M."/>
        </authorList>
    </citation>
    <scope>NUCLEOTIDE SEQUENCE [GENOMIC DNA]</scope>
</reference>
<evidence type="ECO:0000305" key="1"/>
<evidence type="ECO:0000305" key="2">
    <source>
    </source>
</evidence>
<dbReference type="EMBL" id="U00062">
    <property type="status" value="NOT_ANNOTATED_CDS"/>
    <property type="molecule type" value="Genomic_DNA"/>
</dbReference>
<dbReference type="EMBL" id="AF479900">
    <property type="protein sequence ID" value="AAL79213.1"/>
    <property type="molecule type" value="Genomic_DNA"/>
</dbReference>
<dbReference type="STRING" id="4932.YHR032C-A"/>
<dbReference type="PaxDb" id="4932-YHR032C-A"/>
<dbReference type="EnsemblFungi" id="YHR032C-A_mRNA">
    <property type="protein sequence ID" value="YHR032C-A"/>
    <property type="gene ID" value="YHR032C-A"/>
</dbReference>
<dbReference type="AGR" id="SGD:S000028646"/>
<dbReference type="SGD" id="S000028646">
    <property type="gene designation" value="YHR032C-A"/>
</dbReference>
<dbReference type="HOGENOM" id="CLU_3320279_0_0_1"/>
<dbReference type="ChiTaRS" id="YHR032C-A">
    <property type="organism name" value="yeast"/>
</dbReference>
<organism>
    <name type="scientific">Saccharomyces cerevisiae (strain ATCC 204508 / S288c)</name>
    <name type="common">Baker's yeast</name>
    <dbReference type="NCBI Taxonomy" id="559292"/>
    <lineage>
        <taxon>Eukaryota</taxon>
        <taxon>Fungi</taxon>
        <taxon>Dikarya</taxon>
        <taxon>Ascomycota</taxon>
        <taxon>Saccharomycotina</taxon>
        <taxon>Saccharomycetes</taxon>
        <taxon>Saccharomycetales</taxon>
        <taxon>Saccharomycetaceae</taxon>
        <taxon>Saccharomyces</taxon>
    </lineage>
</organism>